<feature type="chain" id="PRO_0000346562" description="Urease accessory protein UreD">
    <location>
        <begin position="1"/>
        <end position="277"/>
    </location>
</feature>
<protein>
    <recommendedName>
        <fullName evidence="1">Urease accessory protein UreD</fullName>
    </recommendedName>
</protein>
<dbReference type="EMBL" id="CP000685">
    <property type="protein sequence ID" value="ABQ07830.1"/>
    <property type="molecule type" value="Genomic_DNA"/>
</dbReference>
<dbReference type="RefSeq" id="WP_012026796.1">
    <property type="nucleotide sequence ID" value="NC_009441.1"/>
</dbReference>
<dbReference type="SMR" id="A5FAE2"/>
<dbReference type="STRING" id="376686.Fjoh_4831"/>
<dbReference type="KEGG" id="fjo:Fjoh_4831"/>
<dbReference type="eggNOG" id="COG0829">
    <property type="taxonomic scope" value="Bacteria"/>
</dbReference>
<dbReference type="HOGENOM" id="CLU_056339_6_0_10"/>
<dbReference type="OrthoDB" id="9807968at2"/>
<dbReference type="Proteomes" id="UP000006694">
    <property type="component" value="Chromosome"/>
</dbReference>
<dbReference type="GO" id="GO:0005737">
    <property type="term" value="C:cytoplasm"/>
    <property type="evidence" value="ECO:0007669"/>
    <property type="project" value="UniProtKB-SubCell"/>
</dbReference>
<dbReference type="GO" id="GO:0016151">
    <property type="term" value="F:nickel cation binding"/>
    <property type="evidence" value="ECO:0007669"/>
    <property type="project" value="UniProtKB-UniRule"/>
</dbReference>
<dbReference type="HAMAP" id="MF_01384">
    <property type="entry name" value="UreD"/>
    <property type="match status" value="1"/>
</dbReference>
<dbReference type="InterPro" id="IPR002669">
    <property type="entry name" value="UreD"/>
</dbReference>
<dbReference type="PANTHER" id="PTHR33643">
    <property type="entry name" value="UREASE ACCESSORY PROTEIN D"/>
    <property type="match status" value="1"/>
</dbReference>
<dbReference type="PANTHER" id="PTHR33643:SF1">
    <property type="entry name" value="UREASE ACCESSORY PROTEIN D"/>
    <property type="match status" value="1"/>
</dbReference>
<dbReference type="Pfam" id="PF01774">
    <property type="entry name" value="UreD"/>
    <property type="match status" value="1"/>
</dbReference>
<comment type="function">
    <text evidence="1">Required for maturation of urease via the functional incorporation of the urease nickel metallocenter.</text>
</comment>
<comment type="subunit">
    <text evidence="1">UreD, UreF and UreG form a complex that acts as a GTP-hydrolysis-dependent molecular chaperone, activating the urease apoprotein by helping to assemble the nickel containing metallocenter of UreC. The UreE protein probably delivers the nickel.</text>
</comment>
<comment type="subcellular location">
    <subcellularLocation>
        <location evidence="1">Cytoplasm</location>
    </subcellularLocation>
</comment>
<comment type="similarity">
    <text evidence="1">Belongs to the UreD family.</text>
</comment>
<reference key="1">
    <citation type="journal article" date="2009" name="Appl. Environ. Microbiol.">
        <title>Novel features of the polysaccharide-digesting gliding bacterium Flavobacterium johnsoniae as revealed by genome sequence analysis.</title>
        <authorList>
            <person name="McBride M.J."/>
            <person name="Xie G."/>
            <person name="Martens E.C."/>
            <person name="Lapidus A."/>
            <person name="Henrissat B."/>
            <person name="Rhodes R.G."/>
            <person name="Goltsman E."/>
            <person name="Wang W."/>
            <person name="Xu J."/>
            <person name="Hunnicutt D.W."/>
            <person name="Staroscik A.M."/>
            <person name="Hoover T.R."/>
            <person name="Cheng Y.Q."/>
            <person name="Stein J.L."/>
        </authorList>
    </citation>
    <scope>NUCLEOTIDE SEQUENCE [LARGE SCALE GENOMIC DNA]</scope>
    <source>
        <strain>ATCC 17061 / DSM 2064 / JCM 8514 / BCRC 14874 / CCUG 350202 / NBRC 14942 / NCIMB 11054 / UW101</strain>
    </source>
</reference>
<accession>A5FAE2</accession>
<proteinExistence type="inferred from homology"/>
<organism>
    <name type="scientific">Flavobacterium johnsoniae (strain ATCC 17061 / DSM 2064 / JCM 8514 / BCRC 14874 / CCUG 350202 / NBRC 14942 / NCIMB 11054 / UW101)</name>
    <name type="common">Cytophaga johnsonae</name>
    <dbReference type="NCBI Taxonomy" id="376686"/>
    <lineage>
        <taxon>Bacteria</taxon>
        <taxon>Pseudomonadati</taxon>
        <taxon>Bacteroidota</taxon>
        <taxon>Flavobacteriia</taxon>
        <taxon>Flavobacteriales</taxon>
        <taxon>Flavobacteriaceae</taxon>
        <taxon>Flavobacterium</taxon>
    </lineage>
</organism>
<evidence type="ECO:0000255" key="1">
    <source>
        <dbReference type="HAMAP-Rule" id="MF_01384"/>
    </source>
</evidence>
<sequence>MINKLNIVSGFKEGRSYLKDAFFTRPFRIADIKEDKTDPSLYLMLMSSSPGILDNDHYDINIQIESESRLMLESQSYQRLFNMQNGAVQQMNVSLADKSTFSYVQHPIVPHEQSIFKAYNVFNLTDNCSLTVGEIITCGRKHSGEVFLFSKFQNLTEVFHNGKLVVKDNVLLQPLLADVQTLGQMEGFTHQATLMYINTGIEDVESCIELAYAELQSEENIAFGVSKPFANGMIVRVLGNGGEQLYNAFRKIQRKLWIAEEKLNIKSQVTDLAENYI</sequence>
<name>URED_FLAJ1</name>
<gene>
    <name evidence="1" type="primary">ureD</name>
    <name type="ordered locus">Fjoh_4831</name>
</gene>
<keyword id="KW-0143">Chaperone</keyword>
<keyword id="KW-0963">Cytoplasm</keyword>
<keyword id="KW-0996">Nickel insertion</keyword>